<accession>Q7MNZ7</accession>
<protein>
    <recommendedName>
        <fullName evidence="1">Glycerol-3-phosphate acyltransferase</fullName>
    </recommendedName>
    <alternativeName>
        <fullName evidence="1">Acyl-PO4 G3P acyltransferase</fullName>
    </alternativeName>
    <alternativeName>
        <fullName evidence="1">Acyl-phosphate--glycerol-3-phosphate acyltransferase</fullName>
    </alternativeName>
    <alternativeName>
        <fullName evidence="1">G3P acyltransferase</fullName>
        <shortName evidence="1">GPAT</shortName>
        <ecNumber evidence="1">2.3.1.275</ecNumber>
    </alternativeName>
    <alternativeName>
        <fullName evidence="1">Lysophosphatidic acid synthase</fullName>
        <shortName evidence="1">LPA synthase</shortName>
    </alternativeName>
</protein>
<comment type="function">
    <text evidence="1">Catalyzes the transfer of an acyl group from acyl-phosphate (acyl-PO(4)) to glycerol-3-phosphate (G3P) to form lysophosphatidic acid (LPA). This enzyme utilizes acyl-phosphate as fatty acyl donor, but not acyl-CoA or acyl-ACP.</text>
</comment>
<comment type="catalytic activity">
    <reaction evidence="1">
        <text>an acyl phosphate + sn-glycerol 3-phosphate = a 1-acyl-sn-glycero-3-phosphate + phosphate</text>
        <dbReference type="Rhea" id="RHEA:34075"/>
        <dbReference type="ChEBI" id="CHEBI:43474"/>
        <dbReference type="ChEBI" id="CHEBI:57597"/>
        <dbReference type="ChEBI" id="CHEBI:57970"/>
        <dbReference type="ChEBI" id="CHEBI:59918"/>
        <dbReference type="EC" id="2.3.1.275"/>
    </reaction>
</comment>
<comment type="pathway">
    <text evidence="1">Lipid metabolism; phospholipid metabolism.</text>
</comment>
<comment type="subunit">
    <text evidence="1">Probably interacts with PlsX.</text>
</comment>
<comment type="subcellular location">
    <subcellularLocation>
        <location evidence="1">Cell inner membrane</location>
        <topology evidence="1">Multi-pass membrane protein</topology>
    </subcellularLocation>
</comment>
<comment type="similarity">
    <text evidence="1">Belongs to the PlsY family.</text>
</comment>
<organism>
    <name type="scientific">Vibrio vulnificus (strain YJ016)</name>
    <dbReference type="NCBI Taxonomy" id="196600"/>
    <lineage>
        <taxon>Bacteria</taxon>
        <taxon>Pseudomonadati</taxon>
        <taxon>Pseudomonadota</taxon>
        <taxon>Gammaproteobacteria</taxon>
        <taxon>Vibrionales</taxon>
        <taxon>Vibrionaceae</taxon>
        <taxon>Vibrio</taxon>
    </lineage>
</organism>
<reference key="1">
    <citation type="journal article" date="2003" name="Genome Res.">
        <title>Comparative genome analysis of Vibrio vulnificus, a marine pathogen.</title>
        <authorList>
            <person name="Chen C.-Y."/>
            <person name="Wu K.-M."/>
            <person name="Chang Y.-C."/>
            <person name="Chang C.-H."/>
            <person name="Tsai H.-C."/>
            <person name="Liao T.-L."/>
            <person name="Liu Y.-M."/>
            <person name="Chen H.-J."/>
            <person name="Shen A.B.-T."/>
            <person name="Li J.-C."/>
            <person name="Su T.-L."/>
            <person name="Shao C.-P."/>
            <person name="Lee C.-T."/>
            <person name="Hor L.-I."/>
            <person name="Tsai S.-F."/>
        </authorList>
    </citation>
    <scope>NUCLEOTIDE SEQUENCE [LARGE SCALE GENOMIC DNA]</scope>
    <source>
        <strain>YJ016</strain>
    </source>
</reference>
<proteinExistence type="inferred from homology"/>
<gene>
    <name evidence="1" type="primary">plsY</name>
    <name type="ordered locus">VV0567</name>
</gene>
<name>PLSY_VIBVY</name>
<sequence length="203" mass="21795">MDAMAVTMTIIAYLLGSISSAVLICRVLRLPDPRGVGSNNPGATNVLRIGGKGAAAAVLLCDMLKGTIPVWSAYYLGIEPVLLGVIAIAACLGHMYPLFFHFQGGKGVATALGAIAPIGLDLTGMIMATWLLVAILFRYSSLAALVTVLLAPMYTWMIKPQYTLPVGMLCCLIVLRHHQNIRRLFTGEEPKIGEKKLQMPKSQ</sequence>
<evidence type="ECO:0000255" key="1">
    <source>
        <dbReference type="HAMAP-Rule" id="MF_01043"/>
    </source>
</evidence>
<dbReference type="EC" id="2.3.1.275" evidence="1"/>
<dbReference type="EMBL" id="BA000037">
    <property type="protein sequence ID" value="BAC93331.1"/>
    <property type="molecule type" value="Genomic_DNA"/>
</dbReference>
<dbReference type="RefSeq" id="WP_011149477.1">
    <property type="nucleotide sequence ID" value="NC_005139.1"/>
</dbReference>
<dbReference type="SMR" id="Q7MNZ7"/>
<dbReference type="STRING" id="672.VV93_v1c05090"/>
<dbReference type="KEGG" id="vvy:VV0567"/>
<dbReference type="PATRIC" id="fig|196600.6.peg.586"/>
<dbReference type="eggNOG" id="COG0344">
    <property type="taxonomic scope" value="Bacteria"/>
</dbReference>
<dbReference type="HOGENOM" id="CLU_081254_0_2_6"/>
<dbReference type="UniPathway" id="UPA00085"/>
<dbReference type="Proteomes" id="UP000002675">
    <property type="component" value="Chromosome I"/>
</dbReference>
<dbReference type="GO" id="GO:0005886">
    <property type="term" value="C:plasma membrane"/>
    <property type="evidence" value="ECO:0007669"/>
    <property type="project" value="UniProtKB-SubCell"/>
</dbReference>
<dbReference type="GO" id="GO:0043772">
    <property type="term" value="F:acyl-phosphate glycerol-3-phosphate acyltransferase activity"/>
    <property type="evidence" value="ECO:0007669"/>
    <property type="project" value="UniProtKB-UniRule"/>
</dbReference>
<dbReference type="GO" id="GO:0008654">
    <property type="term" value="P:phospholipid biosynthetic process"/>
    <property type="evidence" value="ECO:0007669"/>
    <property type="project" value="UniProtKB-UniRule"/>
</dbReference>
<dbReference type="HAMAP" id="MF_01043">
    <property type="entry name" value="PlsY"/>
    <property type="match status" value="1"/>
</dbReference>
<dbReference type="InterPro" id="IPR003811">
    <property type="entry name" value="G3P_acylTferase_PlsY"/>
</dbReference>
<dbReference type="NCBIfam" id="TIGR00023">
    <property type="entry name" value="glycerol-3-phosphate 1-O-acyltransferase PlsY"/>
    <property type="match status" value="1"/>
</dbReference>
<dbReference type="PANTHER" id="PTHR30309:SF0">
    <property type="entry name" value="GLYCEROL-3-PHOSPHATE ACYLTRANSFERASE-RELATED"/>
    <property type="match status" value="1"/>
</dbReference>
<dbReference type="PANTHER" id="PTHR30309">
    <property type="entry name" value="INNER MEMBRANE PROTEIN YGIH"/>
    <property type="match status" value="1"/>
</dbReference>
<dbReference type="Pfam" id="PF02660">
    <property type="entry name" value="G3P_acyltransf"/>
    <property type="match status" value="1"/>
</dbReference>
<dbReference type="SMART" id="SM01207">
    <property type="entry name" value="G3P_acyltransf"/>
    <property type="match status" value="1"/>
</dbReference>
<keyword id="KW-0997">Cell inner membrane</keyword>
<keyword id="KW-1003">Cell membrane</keyword>
<keyword id="KW-0444">Lipid biosynthesis</keyword>
<keyword id="KW-0443">Lipid metabolism</keyword>
<keyword id="KW-0472">Membrane</keyword>
<keyword id="KW-0594">Phospholipid biosynthesis</keyword>
<keyword id="KW-1208">Phospholipid metabolism</keyword>
<keyword id="KW-0808">Transferase</keyword>
<keyword id="KW-0812">Transmembrane</keyword>
<keyword id="KW-1133">Transmembrane helix</keyword>
<feature type="chain" id="PRO_0000188489" description="Glycerol-3-phosphate acyltransferase">
    <location>
        <begin position="1"/>
        <end position="203"/>
    </location>
</feature>
<feature type="transmembrane region" description="Helical" evidence="1">
    <location>
        <begin position="4"/>
        <end position="24"/>
    </location>
</feature>
<feature type="transmembrane region" description="Helical" evidence="1">
    <location>
        <begin position="80"/>
        <end position="100"/>
    </location>
</feature>
<feature type="transmembrane region" description="Helical" evidence="1">
    <location>
        <begin position="117"/>
        <end position="137"/>
    </location>
</feature>
<feature type="transmembrane region" description="Helical" evidence="1">
    <location>
        <begin position="139"/>
        <end position="159"/>
    </location>
</feature>